<organism>
    <name type="scientific">Homo sapiens</name>
    <name type="common">Human</name>
    <dbReference type="NCBI Taxonomy" id="9606"/>
    <lineage>
        <taxon>Eukaryota</taxon>
        <taxon>Metazoa</taxon>
        <taxon>Chordata</taxon>
        <taxon>Craniata</taxon>
        <taxon>Vertebrata</taxon>
        <taxon>Euteleostomi</taxon>
        <taxon>Mammalia</taxon>
        <taxon>Eutheria</taxon>
        <taxon>Euarchontoglires</taxon>
        <taxon>Primates</taxon>
        <taxon>Haplorrhini</taxon>
        <taxon>Catarrhini</taxon>
        <taxon>Hominidae</taxon>
        <taxon>Homo</taxon>
    </lineage>
</organism>
<protein>
    <recommendedName>
        <fullName>Cell division cycle-associated protein 3</fullName>
    </recommendedName>
    <alternativeName>
        <fullName>Gene-rich cluster protein C8</fullName>
    </alternativeName>
    <alternativeName>
        <fullName>Trigger of mitotic entry protein 1</fullName>
        <shortName>TOME-1</shortName>
    </alternativeName>
</protein>
<proteinExistence type="evidence at protein level"/>
<accession>Q99618</accession>
<accession>A8K5V6</accession>
<accession>D3DUS6</accession>
<comment type="function">
    <text evidence="1">F-box-like protein which is required for entry into mitosis. Acts by participating in E3 ligase complexes that mediate the ubiquitination and degradation of WEE1 kinase at G2/M phase (By similarity).</text>
</comment>
<comment type="pathway">
    <text>Protein modification; protein ubiquitination.</text>
</comment>
<comment type="subunit">
    <text evidence="1">Interacts with SKP1. Part of a SCF (SKP1-cullin-F-box) protein ligase complex (By similarity).</text>
</comment>
<comment type="interaction">
    <interactant intactId="EBI-739534">
        <id>Q99618</id>
    </interactant>
    <interactant intactId="EBI-751587">
        <id>Q9GZU7</id>
        <label>CTDSP1</label>
    </interactant>
    <organismsDiffer>false</organismsDiffer>
    <experiments>14</experiments>
</comment>
<comment type="interaction">
    <interactant intactId="EBI-739534">
        <id>Q99618</id>
    </interactant>
    <interactant intactId="EBI-2802973">
        <id>O14595</id>
        <label>CTDSP2</label>
    </interactant>
    <organismsDiffer>false</organismsDiffer>
    <experiments>13</experiments>
</comment>
<comment type="interaction">
    <interactant intactId="EBI-739534">
        <id>Q99618</id>
    </interactant>
    <interactant intactId="EBI-12134515">
        <id>O15194-2</id>
        <label>CTDSPL</label>
    </interactant>
    <organismsDiffer>false</organismsDiffer>
    <experiments>4</experiments>
</comment>
<comment type="interaction">
    <interactant intactId="EBI-739534">
        <id>Q99618</id>
    </interactant>
    <interactant intactId="EBI-359224">
        <id>Q13077</id>
        <label>TRAF1</label>
    </interactant>
    <organismsDiffer>false</organismsDiffer>
    <experiments>6</experiments>
</comment>
<comment type="interaction">
    <interactant intactId="EBI-739534">
        <id>Q99618</id>
    </interactant>
    <interactant intactId="EBI-355744">
        <id>Q12933</id>
        <label>TRAF2</label>
    </interactant>
    <organismsDiffer>false</organismsDiffer>
    <experiments>7</experiments>
</comment>
<comment type="subcellular location">
    <subcellularLocation>
        <location evidence="1">Cytoplasm</location>
        <location evidence="1">Cytosol</location>
    </subcellularLocation>
</comment>
<comment type="domain">
    <text evidence="1">The KEN box is required for the association with the APC/C-Cdh1 complex.</text>
</comment>
<comment type="PTM">
    <text evidence="1">Ubiquitinated and degraded by the APC/C-Cdh1 complex.</text>
</comment>
<feature type="chain" id="PRO_0000287708" description="Cell division cycle-associated protein 3">
    <location>
        <begin position="1"/>
        <end position="268"/>
    </location>
</feature>
<feature type="region of interest" description="Disordered" evidence="3">
    <location>
        <begin position="1"/>
        <end position="232"/>
    </location>
</feature>
<feature type="region of interest" description="F-box-like">
    <location>
        <begin position="91"/>
        <end position="120"/>
    </location>
</feature>
<feature type="region of interest" description="Disordered" evidence="3">
    <location>
        <begin position="247"/>
        <end position="268"/>
    </location>
</feature>
<feature type="short sequence motif" description="KEN box">
    <location>
        <begin position="258"/>
        <end position="260"/>
    </location>
</feature>
<feature type="compositionally biased region" description="Basic and acidic residues" evidence="3">
    <location>
        <begin position="56"/>
        <end position="66"/>
    </location>
</feature>
<feature type="compositionally biased region" description="Pro residues" evidence="3">
    <location>
        <begin position="107"/>
        <end position="116"/>
    </location>
</feature>
<feature type="compositionally biased region" description="Low complexity" evidence="3">
    <location>
        <begin position="117"/>
        <end position="126"/>
    </location>
</feature>
<feature type="compositionally biased region" description="Polar residues" evidence="3">
    <location>
        <begin position="128"/>
        <end position="149"/>
    </location>
</feature>
<feature type="compositionally biased region" description="Polar residues" evidence="3">
    <location>
        <begin position="158"/>
        <end position="169"/>
    </location>
</feature>
<feature type="compositionally biased region" description="Polar residues" evidence="3">
    <location>
        <begin position="178"/>
        <end position="194"/>
    </location>
</feature>
<feature type="compositionally biased region" description="Polar residues" evidence="3">
    <location>
        <begin position="205"/>
        <end position="215"/>
    </location>
</feature>
<feature type="modified residue" description="Phosphoserine" evidence="6 9 10">
    <location>
        <position position="29"/>
    </location>
</feature>
<feature type="modified residue" description="Phosphoserine" evidence="6">
    <location>
        <position position="31"/>
    </location>
</feature>
<feature type="modified residue" description="Phosphothreonine" evidence="6">
    <location>
        <position position="37"/>
    </location>
</feature>
<feature type="modified residue" description="Phosphoserine" evidence="6">
    <location>
        <position position="44"/>
    </location>
</feature>
<feature type="modified residue" description="Phosphoserine" evidence="6">
    <location>
        <position position="64"/>
    </location>
</feature>
<feature type="modified residue" description="Phosphoserine" evidence="10">
    <location>
        <position position="68"/>
    </location>
</feature>
<feature type="modified residue" description="Phosphothreonine" evidence="6 10">
    <location>
        <position position="76"/>
    </location>
</feature>
<feature type="modified residue" description="Phosphoserine" evidence="6 8 10">
    <location>
        <position position="87"/>
    </location>
</feature>
<feature type="modified residue" description="Phosphoserine" evidence="10">
    <location>
        <position position="94"/>
    </location>
</feature>
<feature type="modified residue" description="Phosphoserine" evidence="4 5 6 7 8 9">
    <location>
        <position position="199"/>
    </location>
</feature>
<feature type="modified residue" description="Phosphothreonine" evidence="5">
    <location>
        <position position="202"/>
    </location>
</feature>
<feature type="modified residue" description="Phosphoserine" evidence="4 5 6 7 9 10">
    <location>
        <position position="209"/>
    </location>
</feature>
<feature type="modified residue" description="Phosphothreonine" evidence="2">
    <location>
        <position position="212"/>
    </location>
</feature>
<keyword id="KW-0131">Cell cycle</keyword>
<keyword id="KW-0132">Cell division</keyword>
<keyword id="KW-0963">Cytoplasm</keyword>
<keyword id="KW-0498">Mitosis</keyword>
<keyword id="KW-0597">Phosphoprotein</keyword>
<keyword id="KW-1267">Proteomics identification</keyword>
<keyword id="KW-1185">Reference proteome</keyword>
<keyword id="KW-0832">Ubl conjugation</keyword>
<keyword id="KW-0833">Ubl conjugation pathway</keyword>
<name>CDCA3_HUMAN</name>
<evidence type="ECO:0000250" key="1"/>
<evidence type="ECO:0000250" key="2">
    <source>
        <dbReference type="UniProtKB" id="Q99M54"/>
    </source>
</evidence>
<evidence type="ECO:0000256" key="3">
    <source>
        <dbReference type="SAM" id="MobiDB-lite"/>
    </source>
</evidence>
<evidence type="ECO:0007744" key="4">
    <source>
    </source>
</evidence>
<evidence type="ECO:0007744" key="5">
    <source>
    </source>
</evidence>
<evidence type="ECO:0007744" key="6">
    <source>
    </source>
</evidence>
<evidence type="ECO:0007744" key="7">
    <source>
    </source>
</evidence>
<evidence type="ECO:0007744" key="8">
    <source>
    </source>
</evidence>
<evidence type="ECO:0007744" key="9">
    <source>
    </source>
</evidence>
<evidence type="ECO:0007744" key="10">
    <source>
    </source>
</evidence>
<gene>
    <name type="primary">CDCA3</name>
    <name type="synonym">C8</name>
    <name type="synonym">GRCC8</name>
    <name type="synonym">TOME1</name>
</gene>
<dbReference type="EMBL" id="BG354576">
    <property type="status" value="NOT_ANNOTATED_CDS"/>
    <property type="molecule type" value="mRNA"/>
</dbReference>
<dbReference type="EMBL" id="U47924">
    <property type="protein sequence ID" value="AAB51327.1"/>
    <property type="molecule type" value="Genomic_DNA"/>
</dbReference>
<dbReference type="EMBL" id="AK291421">
    <property type="protein sequence ID" value="BAF84110.1"/>
    <property type="molecule type" value="mRNA"/>
</dbReference>
<dbReference type="EMBL" id="CH471116">
    <property type="protein sequence ID" value="EAW88728.1"/>
    <property type="molecule type" value="Genomic_DNA"/>
</dbReference>
<dbReference type="EMBL" id="CH471116">
    <property type="protein sequence ID" value="EAW88729.1"/>
    <property type="molecule type" value="Genomic_DNA"/>
</dbReference>
<dbReference type="EMBL" id="BC002551">
    <property type="protein sequence ID" value="AAH02551.1"/>
    <property type="molecule type" value="mRNA"/>
</dbReference>
<dbReference type="EMBL" id="BC036512">
    <property type="protein sequence ID" value="AAH36512.1"/>
    <property type="molecule type" value="mRNA"/>
</dbReference>
<dbReference type="CCDS" id="CCDS8565.1"/>
<dbReference type="RefSeq" id="NP_001284532.1">
    <property type="nucleotide sequence ID" value="NM_001297603.2"/>
</dbReference>
<dbReference type="RefSeq" id="NP_001284533.1">
    <property type="nucleotide sequence ID" value="NM_001297604.2"/>
</dbReference>
<dbReference type="RefSeq" id="NP_001317948.1">
    <property type="nucleotide sequence ID" value="NM_001331019.1"/>
</dbReference>
<dbReference type="RefSeq" id="NP_112589.1">
    <property type="nucleotide sequence ID" value="NM_031299.7"/>
</dbReference>
<dbReference type="BioGRID" id="123657">
    <property type="interactions" value="197"/>
</dbReference>
<dbReference type="FunCoup" id="Q99618">
    <property type="interactions" value="767"/>
</dbReference>
<dbReference type="IntAct" id="Q99618">
    <property type="interactions" value="85"/>
</dbReference>
<dbReference type="MINT" id="Q99618"/>
<dbReference type="STRING" id="9606.ENSP00000442068"/>
<dbReference type="GlyGen" id="Q99618">
    <property type="glycosylation" value="2 sites, 1 O-linked glycan (1 site)"/>
</dbReference>
<dbReference type="iPTMnet" id="Q99618"/>
<dbReference type="PhosphoSitePlus" id="Q99618"/>
<dbReference type="SwissPalm" id="Q99618"/>
<dbReference type="BioMuta" id="CDCA3"/>
<dbReference type="DMDM" id="74732787"/>
<dbReference type="jPOST" id="Q99618"/>
<dbReference type="MassIVE" id="Q99618"/>
<dbReference type="PaxDb" id="9606-ENSP00000442068"/>
<dbReference type="PeptideAtlas" id="Q99618"/>
<dbReference type="ProteomicsDB" id="78361"/>
<dbReference type="Pumba" id="Q99618"/>
<dbReference type="Antibodypedia" id="11223">
    <property type="antibodies" value="206 antibodies from 33 providers"/>
</dbReference>
<dbReference type="DNASU" id="83461"/>
<dbReference type="Ensembl" id="ENST00000535406.5">
    <property type="protein sequence ID" value="ENSP00000446339.1"/>
    <property type="gene ID" value="ENSG00000111665.12"/>
</dbReference>
<dbReference type="Ensembl" id="ENST00000538862.7">
    <property type="protein sequence ID" value="ENSP00000442068.1"/>
    <property type="gene ID" value="ENSG00000111665.12"/>
</dbReference>
<dbReference type="GeneID" id="83461"/>
<dbReference type="KEGG" id="hsa:83461"/>
<dbReference type="MANE-Select" id="ENST00000538862.7">
    <property type="protein sequence ID" value="ENSP00000442068.1"/>
    <property type="RefSeq nucleotide sequence ID" value="NM_031299.7"/>
    <property type="RefSeq protein sequence ID" value="NP_112589.1"/>
</dbReference>
<dbReference type="UCSC" id="uc001qrg.3">
    <property type="organism name" value="human"/>
</dbReference>
<dbReference type="AGR" id="HGNC:14624"/>
<dbReference type="CTD" id="83461"/>
<dbReference type="DisGeNET" id="83461"/>
<dbReference type="GeneCards" id="CDCA3"/>
<dbReference type="HGNC" id="HGNC:14624">
    <property type="gene designation" value="CDCA3"/>
</dbReference>
<dbReference type="HPA" id="ENSG00000111665">
    <property type="expression patterns" value="Tissue enhanced (lymphoid tissue, retina)"/>
</dbReference>
<dbReference type="MalaCards" id="CDCA3"/>
<dbReference type="MIM" id="607749">
    <property type="type" value="gene"/>
</dbReference>
<dbReference type="neXtProt" id="NX_Q99618"/>
<dbReference type="OpenTargets" id="ENSG00000111665"/>
<dbReference type="PharmGKB" id="PA26276"/>
<dbReference type="VEuPathDB" id="HostDB:ENSG00000111665"/>
<dbReference type="eggNOG" id="ENOG502S7V2">
    <property type="taxonomic scope" value="Eukaryota"/>
</dbReference>
<dbReference type="GeneTree" id="ENSGT00390000017343"/>
<dbReference type="InParanoid" id="Q99618"/>
<dbReference type="OMA" id="KITGRAW"/>
<dbReference type="OrthoDB" id="6337960at2759"/>
<dbReference type="PAN-GO" id="Q99618">
    <property type="GO annotations" value="0 GO annotations based on evolutionary models"/>
</dbReference>
<dbReference type="PhylomeDB" id="Q99618"/>
<dbReference type="TreeFam" id="TF101068"/>
<dbReference type="PathwayCommons" id="Q99618"/>
<dbReference type="SignaLink" id="Q99618"/>
<dbReference type="SIGNOR" id="Q99618"/>
<dbReference type="UniPathway" id="UPA00143"/>
<dbReference type="BioGRID-ORCS" id="83461">
    <property type="hits" value="149 hits in 1159 CRISPR screens"/>
</dbReference>
<dbReference type="ChiTaRS" id="CDCA3">
    <property type="organism name" value="human"/>
</dbReference>
<dbReference type="GeneWiki" id="CDCA3"/>
<dbReference type="GenomeRNAi" id="83461"/>
<dbReference type="Pharos" id="Q99618">
    <property type="development level" value="Tbio"/>
</dbReference>
<dbReference type="PRO" id="PR:Q99618"/>
<dbReference type="Proteomes" id="UP000005640">
    <property type="component" value="Chromosome 12"/>
</dbReference>
<dbReference type="RNAct" id="Q99618">
    <property type="molecule type" value="protein"/>
</dbReference>
<dbReference type="Bgee" id="ENSG00000111665">
    <property type="expression patterns" value="Expressed in ventricular zone and 127 other cell types or tissues"/>
</dbReference>
<dbReference type="ExpressionAtlas" id="Q99618">
    <property type="expression patterns" value="baseline and differential"/>
</dbReference>
<dbReference type="GO" id="GO:0005912">
    <property type="term" value="C:adherens junction"/>
    <property type="evidence" value="ECO:0000314"/>
    <property type="project" value="BHF-UCL"/>
</dbReference>
<dbReference type="GO" id="GO:0005829">
    <property type="term" value="C:cytosol"/>
    <property type="evidence" value="ECO:0007669"/>
    <property type="project" value="UniProtKB-SubCell"/>
</dbReference>
<dbReference type="GO" id="GO:0051301">
    <property type="term" value="P:cell division"/>
    <property type="evidence" value="ECO:0007669"/>
    <property type="project" value="UniProtKB-KW"/>
</dbReference>
<dbReference type="GO" id="GO:0016567">
    <property type="term" value="P:protein ubiquitination"/>
    <property type="evidence" value="ECO:0007669"/>
    <property type="project" value="UniProtKB-UniPathway"/>
</dbReference>
<dbReference type="InterPro" id="IPR038832">
    <property type="entry name" value="CDCA3"/>
</dbReference>
<dbReference type="PANTHER" id="PTHR34756">
    <property type="entry name" value="CELL DIVISION CYCLE-ASSOCIATED PROTEIN 3"/>
    <property type="match status" value="1"/>
</dbReference>
<dbReference type="PANTHER" id="PTHR34756:SF1">
    <property type="entry name" value="CELL DIVISION CYCLE-ASSOCIATED PROTEIN 3"/>
    <property type="match status" value="1"/>
</dbReference>
<reference key="1">
    <citation type="journal article" date="2001" name="Curr. Cancer Drug Targets">
        <title>Drug target discovery by gene expression analysis: cell cycle genes.</title>
        <authorList>
            <person name="Walker M.G."/>
        </authorList>
    </citation>
    <scope>NUCLEOTIDE SEQUENCE [MRNA]</scope>
</reference>
<reference key="2">
    <citation type="journal article" date="1997" name="Genome Res.">
        <title>Large-scale sequencing in human chromosome 12p13: experimental and computational gene structure determination.</title>
        <authorList>
            <person name="Ansari-Lari M.A."/>
            <person name="Shen Y."/>
            <person name="Muzny D.M."/>
            <person name="Lee W."/>
            <person name="Gibbs R.A."/>
        </authorList>
    </citation>
    <scope>NUCLEOTIDE SEQUENCE [GENOMIC DNA]</scope>
    <source>
        <tissue>Brain</tissue>
    </source>
</reference>
<reference key="3">
    <citation type="journal article" date="2004" name="Nat. Genet.">
        <title>Complete sequencing and characterization of 21,243 full-length human cDNAs.</title>
        <authorList>
            <person name="Ota T."/>
            <person name="Suzuki Y."/>
            <person name="Nishikawa T."/>
            <person name="Otsuki T."/>
            <person name="Sugiyama T."/>
            <person name="Irie R."/>
            <person name="Wakamatsu A."/>
            <person name="Hayashi K."/>
            <person name="Sato H."/>
            <person name="Nagai K."/>
            <person name="Kimura K."/>
            <person name="Makita H."/>
            <person name="Sekine M."/>
            <person name="Obayashi M."/>
            <person name="Nishi T."/>
            <person name="Shibahara T."/>
            <person name="Tanaka T."/>
            <person name="Ishii S."/>
            <person name="Yamamoto J."/>
            <person name="Saito K."/>
            <person name="Kawai Y."/>
            <person name="Isono Y."/>
            <person name="Nakamura Y."/>
            <person name="Nagahari K."/>
            <person name="Murakami K."/>
            <person name="Yasuda T."/>
            <person name="Iwayanagi T."/>
            <person name="Wagatsuma M."/>
            <person name="Shiratori A."/>
            <person name="Sudo H."/>
            <person name="Hosoiri T."/>
            <person name="Kaku Y."/>
            <person name="Kodaira H."/>
            <person name="Kondo H."/>
            <person name="Sugawara M."/>
            <person name="Takahashi M."/>
            <person name="Kanda K."/>
            <person name="Yokoi T."/>
            <person name="Furuya T."/>
            <person name="Kikkawa E."/>
            <person name="Omura Y."/>
            <person name="Abe K."/>
            <person name="Kamihara K."/>
            <person name="Katsuta N."/>
            <person name="Sato K."/>
            <person name="Tanikawa M."/>
            <person name="Yamazaki M."/>
            <person name="Ninomiya K."/>
            <person name="Ishibashi T."/>
            <person name="Yamashita H."/>
            <person name="Murakawa K."/>
            <person name="Fujimori K."/>
            <person name="Tanai H."/>
            <person name="Kimata M."/>
            <person name="Watanabe M."/>
            <person name="Hiraoka S."/>
            <person name="Chiba Y."/>
            <person name="Ishida S."/>
            <person name="Ono Y."/>
            <person name="Takiguchi S."/>
            <person name="Watanabe S."/>
            <person name="Yosida M."/>
            <person name="Hotuta T."/>
            <person name="Kusano J."/>
            <person name="Kanehori K."/>
            <person name="Takahashi-Fujii A."/>
            <person name="Hara H."/>
            <person name="Tanase T.-O."/>
            <person name="Nomura Y."/>
            <person name="Togiya S."/>
            <person name="Komai F."/>
            <person name="Hara R."/>
            <person name="Takeuchi K."/>
            <person name="Arita M."/>
            <person name="Imose N."/>
            <person name="Musashino K."/>
            <person name="Yuuki H."/>
            <person name="Oshima A."/>
            <person name="Sasaki N."/>
            <person name="Aotsuka S."/>
            <person name="Yoshikawa Y."/>
            <person name="Matsunawa H."/>
            <person name="Ichihara T."/>
            <person name="Shiohata N."/>
            <person name="Sano S."/>
            <person name="Moriya S."/>
            <person name="Momiyama H."/>
            <person name="Satoh N."/>
            <person name="Takami S."/>
            <person name="Terashima Y."/>
            <person name="Suzuki O."/>
            <person name="Nakagawa S."/>
            <person name="Senoh A."/>
            <person name="Mizoguchi H."/>
            <person name="Goto Y."/>
            <person name="Shimizu F."/>
            <person name="Wakebe H."/>
            <person name="Hishigaki H."/>
            <person name="Watanabe T."/>
            <person name="Sugiyama A."/>
            <person name="Takemoto M."/>
            <person name="Kawakami B."/>
            <person name="Yamazaki M."/>
            <person name="Watanabe K."/>
            <person name="Kumagai A."/>
            <person name="Itakura S."/>
            <person name="Fukuzumi Y."/>
            <person name="Fujimori Y."/>
            <person name="Komiyama M."/>
            <person name="Tashiro H."/>
            <person name="Tanigami A."/>
            <person name="Fujiwara T."/>
            <person name="Ono T."/>
            <person name="Yamada K."/>
            <person name="Fujii Y."/>
            <person name="Ozaki K."/>
            <person name="Hirao M."/>
            <person name="Ohmori Y."/>
            <person name="Kawabata A."/>
            <person name="Hikiji T."/>
            <person name="Kobatake N."/>
            <person name="Inagaki H."/>
            <person name="Ikema Y."/>
            <person name="Okamoto S."/>
            <person name="Okitani R."/>
            <person name="Kawakami T."/>
            <person name="Noguchi S."/>
            <person name="Itoh T."/>
            <person name="Shigeta K."/>
            <person name="Senba T."/>
            <person name="Matsumura K."/>
            <person name="Nakajima Y."/>
            <person name="Mizuno T."/>
            <person name="Morinaga M."/>
            <person name="Sasaki M."/>
            <person name="Togashi T."/>
            <person name="Oyama M."/>
            <person name="Hata H."/>
            <person name="Watanabe M."/>
            <person name="Komatsu T."/>
            <person name="Mizushima-Sugano J."/>
            <person name="Satoh T."/>
            <person name="Shirai Y."/>
            <person name="Takahashi Y."/>
            <person name="Nakagawa K."/>
            <person name="Okumura K."/>
            <person name="Nagase T."/>
            <person name="Nomura N."/>
            <person name="Kikuchi H."/>
            <person name="Masuho Y."/>
            <person name="Yamashita R."/>
            <person name="Nakai K."/>
            <person name="Yada T."/>
            <person name="Nakamura Y."/>
            <person name="Ohara O."/>
            <person name="Isogai T."/>
            <person name="Sugano S."/>
        </authorList>
    </citation>
    <scope>NUCLEOTIDE SEQUENCE [LARGE SCALE MRNA]</scope>
    <source>
        <tissue>Brain</tissue>
    </source>
</reference>
<reference key="4">
    <citation type="submission" date="2005-09" db="EMBL/GenBank/DDBJ databases">
        <authorList>
            <person name="Mural R.J."/>
            <person name="Istrail S."/>
            <person name="Sutton G.G."/>
            <person name="Florea L."/>
            <person name="Halpern A.L."/>
            <person name="Mobarry C.M."/>
            <person name="Lippert R."/>
            <person name="Walenz B."/>
            <person name="Shatkay H."/>
            <person name="Dew I."/>
            <person name="Miller J.R."/>
            <person name="Flanigan M.J."/>
            <person name="Edwards N.J."/>
            <person name="Bolanos R."/>
            <person name="Fasulo D."/>
            <person name="Halldorsson B.V."/>
            <person name="Hannenhalli S."/>
            <person name="Turner R."/>
            <person name="Yooseph S."/>
            <person name="Lu F."/>
            <person name="Nusskern D.R."/>
            <person name="Shue B.C."/>
            <person name="Zheng X.H."/>
            <person name="Zhong F."/>
            <person name="Delcher A.L."/>
            <person name="Huson D.H."/>
            <person name="Kravitz S.A."/>
            <person name="Mouchard L."/>
            <person name="Reinert K."/>
            <person name="Remington K.A."/>
            <person name="Clark A.G."/>
            <person name="Waterman M.S."/>
            <person name="Eichler E.E."/>
            <person name="Adams M.D."/>
            <person name="Hunkapiller M.W."/>
            <person name="Myers E.W."/>
            <person name="Venter J.C."/>
        </authorList>
    </citation>
    <scope>NUCLEOTIDE SEQUENCE [LARGE SCALE GENOMIC DNA]</scope>
</reference>
<reference key="5">
    <citation type="journal article" date="2004" name="Genome Res.">
        <title>The status, quality, and expansion of the NIH full-length cDNA project: the Mammalian Gene Collection (MGC).</title>
        <authorList>
            <consortium name="The MGC Project Team"/>
        </authorList>
    </citation>
    <scope>NUCLEOTIDE SEQUENCE [LARGE SCALE MRNA]</scope>
    <source>
        <tissue>Placenta</tissue>
        <tissue>Testis</tissue>
    </source>
</reference>
<reference key="6">
    <citation type="journal article" date="2006" name="Cell">
        <title>Global, in vivo, and site-specific phosphorylation dynamics in signaling networks.</title>
        <authorList>
            <person name="Olsen J.V."/>
            <person name="Blagoev B."/>
            <person name="Gnad F."/>
            <person name="Macek B."/>
            <person name="Kumar C."/>
            <person name="Mortensen P."/>
            <person name="Mann M."/>
        </authorList>
    </citation>
    <scope>PHOSPHORYLATION [LARGE SCALE ANALYSIS] AT SER-199 AND SER-209</scope>
    <scope>IDENTIFICATION BY MASS SPECTROMETRY [LARGE SCALE ANALYSIS]</scope>
    <source>
        <tissue>Cervix carcinoma</tissue>
    </source>
</reference>
<reference key="7">
    <citation type="journal article" date="2008" name="J. Proteome Res.">
        <title>Combining protein-based IMAC, peptide-based IMAC, and MudPIT for efficient phosphoproteomic analysis.</title>
        <authorList>
            <person name="Cantin G.T."/>
            <person name="Yi W."/>
            <person name="Lu B."/>
            <person name="Park S.K."/>
            <person name="Xu T."/>
            <person name="Lee J.-D."/>
            <person name="Yates J.R. III"/>
        </authorList>
    </citation>
    <scope>PHOSPHORYLATION [LARGE SCALE ANALYSIS] AT SER-199; THR-202 AND SER-209</scope>
    <scope>IDENTIFICATION BY MASS SPECTROMETRY [LARGE SCALE ANALYSIS]</scope>
    <source>
        <tissue>Cervix carcinoma</tissue>
    </source>
</reference>
<reference key="8">
    <citation type="journal article" date="2008" name="Mol. Cell">
        <title>Kinase-selective enrichment enables quantitative phosphoproteomics of the kinome across the cell cycle.</title>
        <authorList>
            <person name="Daub H."/>
            <person name="Olsen J.V."/>
            <person name="Bairlein M."/>
            <person name="Gnad F."/>
            <person name="Oppermann F.S."/>
            <person name="Korner R."/>
            <person name="Greff Z."/>
            <person name="Keri G."/>
            <person name="Stemmann O."/>
            <person name="Mann M."/>
        </authorList>
    </citation>
    <scope>PHOSPHORYLATION [LARGE SCALE ANALYSIS] AT SER-199 AND SER-209</scope>
    <scope>IDENTIFICATION BY MASS SPECTROMETRY [LARGE SCALE ANALYSIS]</scope>
    <source>
        <tissue>Cervix carcinoma</tissue>
    </source>
</reference>
<reference key="9">
    <citation type="journal article" date="2008" name="Proc. Natl. Acad. Sci. U.S.A.">
        <title>A quantitative atlas of mitotic phosphorylation.</title>
        <authorList>
            <person name="Dephoure N."/>
            <person name="Zhou C."/>
            <person name="Villen J."/>
            <person name="Beausoleil S.A."/>
            <person name="Bakalarski C.E."/>
            <person name="Elledge S.J."/>
            <person name="Gygi S.P."/>
        </authorList>
    </citation>
    <scope>PHOSPHORYLATION [LARGE SCALE ANALYSIS] AT SER-29; SER-31; THR-37; SER-44; SER-64; THR-76; SER-87; SER-199 AND SER-209</scope>
    <scope>IDENTIFICATION BY MASS SPECTROMETRY [LARGE SCALE ANALYSIS]</scope>
    <source>
        <tissue>Cervix carcinoma</tissue>
    </source>
</reference>
<reference key="10">
    <citation type="journal article" date="2009" name="Anal. Chem.">
        <title>Lys-N and trypsin cover complementary parts of the phosphoproteome in a refined SCX-based approach.</title>
        <authorList>
            <person name="Gauci S."/>
            <person name="Helbig A.O."/>
            <person name="Slijper M."/>
            <person name="Krijgsveld J."/>
            <person name="Heck A.J."/>
            <person name="Mohammed S."/>
        </authorList>
    </citation>
    <scope>IDENTIFICATION BY MASS SPECTROMETRY [LARGE SCALE ANALYSIS]</scope>
</reference>
<reference key="11">
    <citation type="journal article" date="2009" name="Sci. Signal.">
        <title>Quantitative phosphoproteomic analysis of T cell receptor signaling reveals system-wide modulation of protein-protein interactions.</title>
        <authorList>
            <person name="Mayya V."/>
            <person name="Lundgren D.H."/>
            <person name="Hwang S.-I."/>
            <person name="Rezaul K."/>
            <person name="Wu L."/>
            <person name="Eng J.K."/>
            <person name="Rodionov V."/>
            <person name="Han D.K."/>
        </authorList>
    </citation>
    <scope>PHOSPHORYLATION [LARGE SCALE ANALYSIS] AT SER-87 AND SER-199</scope>
    <scope>IDENTIFICATION BY MASS SPECTROMETRY [LARGE SCALE ANALYSIS]</scope>
    <source>
        <tissue>Leukemic T-cell</tissue>
    </source>
</reference>
<reference key="12">
    <citation type="journal article" date="2010" name="Sci. Signal.">
        <title>Quantitative phosphoproteomics reveals widespread full phosphorylation site occupancy during mitosis.</title>
        <authorList>
            <person name="Olsen J.V."/>
            <person name="Vermeulen M."/>
            <person name="Santamaria A."/>
            <person name="Kumar C."/>
            <person name="Miller M.L."/>
            <person name="Jensen L.J."/>
            <person name="Gnad F."/>
            <person name="Cox J."/>
            <person name="Jensen T.S."/>
            <person name="Nigg E.A."/>
            <person name="Brunak S."/>
            <person name="Mann M."/>
        </authorList>
    </citation>
    <scope>PHOSPHORYLATION [LARGE SCALE ANALYSIS] AT SER-29; SER-199 AND SER-209</scope>
    <scope>IDENTIFICATION BY MASS SPECTROMETRY [LARGE SCALE ANALYSIS]</scope>
    <source>
        <tissue>Cervix carcinoma</tissue>
    </source>
</reference>
<reference key="13">
    <citation type="journal article" date="2013" name="J. Proteome Res.">
        <title>Toward a comprehensive characterization of a human cancer cell phosphoproteome.</title>
        <authorList>
            <person name="Zhou H."/>
            <person name="Di Palma S."/>
            <person name="Preisinger C."/>
            <person name="Peng M."/>
            <person name="Polat A.N."/>
            <person name="Heck A.J."/>
            <person name="Mohammed S."/>
        </authorList>
    </citation>
    <scope>PHOSPHORYLATION [LARGE SCALE ANALYSIS] AT SER-29; SER-68; THR-76; SER-87; SER-94 AND SER-209</scope>
    <scope>IDENTIFICATION BY MASS SPECTROMETRY [LARGE SCALE ANALYSIS]</scope>
    <source>
        <tissue>Cervix carcinoma</tissue>
        <tissue>Erythroleukemia</tissue>
    </source>
</reference>
<sequence length="268" mass="28998">MGSAKSVPVTPARPPPHNKHLARVADPRSPSAGILRTPIQVESSPQPGLPAGEQLEGLKHAQDSDPRSPTLGIARTPMKTSSGDPPSPLVKQLSEVFETEDSKSNLPPEPVLPPEAPLSSELDLPLGTQLSVEEQMPPWNQTEFPSKQVFSKEEARQPTETPVASQSSDKPSRDPETPRSSGSMRNRWKPNSSKVLGRSPLTILQDDNSPGTLTLRQGKRPSPLSENVSELKEGAILGTGRLLKTGGRAWEQGQDHDKENQHFPLVES</sequence>